<protein>
    <recommendedName>
        <fullName>Glutamine synthetase translation inhibitor</fullName>
    </recommendedName>
</protein>
<gene>
    <name type="primary">gstI</name>
</gene>
<reference key="1">
    <citation type="journal article" date="2000" name="Mol. Microbiol.">
        <title>Inhibition of glutamine synthetase II expression by the product of the gstI gene.</title>
        <authorList>
            <person name="Spinosa M."/>
            <person name="Riccio A."/>
            <person name="Mandrich L."/>
            <person name="Manco G."/>
            <person name="Lamberti A."/>
            <person name="Iaccarino M."/>
            <person name="Merrick M."/>
            <person name="Patriarca E.J."/>
        </authorList>
    </citation>
    <scope>NUCLEOTIDE SEQUENCE [GENOMIC DNA]</scope>
    <source>
        <strain>LPR1105</strain>
    </source>
</reference>
<comment type="function">
    <text>Inhibits the synthesis of glutamine synthetase II.</text>
</comment>
<sequence length="63" mass="7331">MPTGFHRESATIYQFPVKAIRNANRFERARLMEREAAEVCDAALDSCWYHDEAVRESDRPTKS</sequence>
<feature type="chain" id="PRO_0000083868" description="Glutamine synthetase translation inhibitor">
    <location>
        <begin position="1"/>
        <end position="63"/>
    </location>
</feature>
<dbReference type="EMBL" id="AJ278117">
    <property type="protein sequence ID" value="CAC00713.1"/>
    <property type="molecule type" value="Genomic_DNA"/>
</dbReference>
<dbReference type="RefSeq" id="WP_018073894.1">
    <property type="nucleotide sequence ID" value="NZ_SIQB01000001.1"/>
</dbReference>
<dbReference type="eggNOG" id="ENOG5031HGM">
    <property type="taxonomic scope" value="Bacteria"/>
</dbReference>
<dbReference type="InterPro" id="IPR021232">
    <property type="entry name" value="DUF2735"/>
</dbReference>
<dbReference type="Pfam" id="PF10931">
    <property type="entry name" value="DUF2735"/>
    <property type="match status" value="1"/>
</dbReference>
<organism>
    <name type="scientific">Rhizobium leguminosarum</name>
    <dbReference type="NCBI Taxonomy" id="384"/>
    <lineage>
        <taxon>Bacteria</taxon>
        <taxon>Pseudomonadati</taxon>
        <taxon>Pseudomonadota</taxon>
        <taxon>Alphaproteobacteria</taxon>
        <taxon>Hyphomicrobiales</taxon>
        <taxon>Rhizobiaceae</taxon>
        <taxon>Rhizobium/Agrobacterium group</taxon>
        <taxon>Rhizobium</taxon>
    </lineage>
</organism>
<proteinExistence type="predicted"/>
<accession>Q9K4V1</accession>
<name>GSTI_RHILE</name>